<sequence length="263" mass="29251">MECKTVFLNGDFLKNSVNVNLNRLATVETLLRHVLGDSYETVLERAYLTHQSRIVHPDIQLCKLEGKSTSAHLNLTLCTRVLGGKGGFGSQLRAAGGRMSKKRNEQENQDSCRDLDGNRLGTIRQAKELSEYLAKKPAETRAKKEAKKQKLNKVLAADSSSSRFDDHEYLEDLEQSVSNVRDAFQNSLLYRRGSTSASSFSSGSNGATTDEPAEKEARNNNSSINSWSRRMQASESSNEAEGEDSESQTSKSLYEWDDPLYGL</sequence>
<evidence type="ECO:0000256" key="1">
    <source>
        <dbReference type="SAM" id="MobiDB-lite"/>
    </source>
</evidence>
<evidence type="ECO:0000269" key="2">
    <source>
    </source>
</evidence>
<evidence type="ECO:0000269" key="3">
    <source>
    </source>
</evidence>
<evidence type="ECO:0000269" key="4">
    <source>
    </source>
</evidence>
<evidence type="ECO:0000305" key="5"/>
<evidence type="ECO:0000305" key="6">
    <source>
    </source>
</evidence>
<evidence type="ECO:0000305" key="7">
    <source>
    </source>
</evidence>
<evidence type="ECO:0000312" key="8">
    <source>
        <dbReference type="PomBase" id="SPAC31G5.18c"/>
    </source>
</evidence>
<reference key="1">
    <citation type="journal article" date="2002" name="Nature">
        <title>The genome sequence of Schizosaccharomyces pombe.</title>
        <authorList>
            <person name="Wood V."/>
            <person name="Gwilliam R."/>
            <person name="Rajandream M.A."/>
            <person name="Lyne M.H."/>
            <person name="Lyne R."/>
            <person name="Stewart A."/>
            <person name="Sgouros J.G."/>
            <person name="Peat N."/>
            <person name="Hayles J."/>
            <person name="Baker S.G."/>
            <person name="Basham D."/>
            <person name="Bowman S."/>
            <person name="Brooks K."/>
            <person name="Brown D."/>
            <person name="Brown S."/>
            <person name="Chillingworth T."/>
            <person name="Churcher C.M."/>
            <person name="Collins M."/>
            <person name="Connor R."/>
            <person name="Cronin A."/>
            <person name="Davis P."/>
            <person name="Feltwell T."/>
            <person name="Fraser A."/>
            <person name="Gentles S."/>
            <person name="Goble A."/>
            <person name="Hamlin N."/>
            <person name="Harris D.E."/>
            <person name="Hidalgo J."/>
            <person name="Hodgson G."/>
            <person name="Holroyd S."/>
            <person name="Hornsby T."/>
            <person name="Howarth S."/>
            <person name="Huckle E.J."/>
            <person name="Hunt S."/>
            <person name="Jagels K."/>
            <person name="James K.D."/>
            <person name="Jones L."/>
            <person name="Jones M."/>
            <person name="Leather S."/>
            <person name="McDonald S."/>
            <person name="McLean J."/>
            <person name="Mooney P."/>
            <person name="Moule S."/>
            <person name="Mungall K.L."/>
            <person name="Murphy L.D."/>
            <person name="Niblett D."/>
            <person name="Odell C."/>
            <person name="Oliver K."/>
            <person name="O'Neil S."/>
            <person name="Pearson D."/>
            <person name="Quail M.A."/>
            <person name="Rabbinowitsch E."/>
            <person name="Rutherford K.M."/>
            <person name="Rutter S."/>
            <person name="Saunders D."/>
            <person name="Seeger K."/>
            <person name="Sharp S."/>
            <person name="Skelton J."/>
            <person name="Simmonds M.N."/>
            <person name="Squares R."/>
            <person name="Squares S."/>
            <person name="Stevens K."/>
            <person name="Taylor K."/>
            <person name="Taylor R.G."/>
            <person name="Tivey A."/>
            <person name="Walsh S.V."/>
            <person name="Warren T."/>
            <person name="Whitehead S."/>
            <person name="Woodward J.R."/>
            <person name="Volckaert G."/>
            <person name="Aert R."/>
            <person name="Robben J."/>
            <person name="Grymonprez B."/>
            <person name="Weltjens I."/>
            <person name="Vanstreels E."/>
            <person name="Rieger M."/>
            <person name="Schaefer M."/>
            <person name="Mueller-Auer S."/>
            <person name="Gabel C."/>
            <person name="Fuchs M."/>
            <person name="Duesterhoeft A."/>
            <person name="Fritzc C."/>
            <person name="Holzer E."/>
            <person name="Moestl D."/>
            <person name="Hilbert H."/>
            <person name="Borzym K."/>
            <person name="Langer I."/>
            <person name="Beck A."/>
            <person name="Lehrach H."/>
            <person name="Reinhardt R."/>
            <person name="Pohl T.M."/>
            <person name="Eger P."/>
            <person name="Zimmermann W."/>
            <person name="Wedler H."/>
            <person name="Wambutt R."/>
            <person name="Purnelle B."/>
            <person name="Goffeau A."/>
            <person name="Cadieu E."/>
            <person name="Dreano S."/>
            <person name="Gloux S."/>
            <person name="Lelaure V."/>
            <person name="Mottier S."/>
            <person name="Galibert F."/>
            <person name="Aves S.J."/>
            <person name="Xiang Z."/>
            <person name="Hunt C."/>
            <person name="Moore K."/>
            <person name="Hurst S.M."/>
            <person name="Lucas M."/>
            <person name="Rochet M."/>
            <person name="Gaillardin C."/>
            <person name="Tallada V.A."/>
            <person name="Garzon A."/>
            <person name="Thode G."/>
            <person name="Daga R.R."/>
            <person name="Cruzado L."/>
            <person name="Jimenez J."/>
            <person name="Sanchez M."/>
            <person name="del Rey F."/>
            <person name="Benito J."/>
            <person name="Dominguez A."/>
            <person name="Revuelta J.L."/>
            <person name="Moreno S."/>
            <person name="Armstrong J."/>
            <person name="Forsburg S.L."/>
            <person name="Cerutti L."/>
            <person name="Lowe T."/>
            <person name="McCombie W.R."/>
            <person name="Paulsen I."/>
            <person name="Potashkin J."/>
            <person name="Shpakovski G.V."/>
            <person name="Ussery D."/>
            <person name="Barrell B.G."/>
            <person name="Nurse P."/>
        </authorList>
    </citation>
    <scope>NUCLEOTIDE SEQUENCE [LARGE SCALE GENOMIC DNA]</scope>
    <source>
        <strain>972 / ATCC 24843</strain>
    </source>
</reference>
<reference key="2">
    <citation type="journal article" date="2006" name="Nat. Biotechnol.">
        <title>ORFeome cloning and global analysis of protein localization in the fission yeast Schizosaccharomyces pombe.</title>
        <authorList>
            <person name="Matsuyama A."/>
            <person name="Arai R."/>
            <person name="Yashiroda Y."/>
            <person name="Shirai A."/>
            <person name="Kamata A."/>
            <person name="Sekido S."/>
            <person name="Kobayashi Y."/>
            <person name="Hashimoto A."/>
            <person name="Hamamoto M."/>
            <person name="Hiraoka Y."/>
            <person name="Horinouchi S."/>
            <person name="Yoshida M."/>
        </authorList>
    </citation>
    <scope>SUBCELLULAR LOCATION [LARGE SCALE ANALYSIS]</scope>
</reference>
<reference key="3">
    <citation type="journal article" date="2011" name="Biochem. Biophys. Res. Commun.">
        <title>Sde2: a novel nuclear protein essential for telomeric silencing and genomic stability in Schizosaccharomyces pombe.</title>
        <authorList>
            <person name="Sugioka-Sugiyama R."/>
            <person name="Sugiyama T."/>
        </authorList>
    </citation>
    <scope>FUNCTION</scope>
    <scope>SUBCELLULAR LOCATION</scope>
</reference>
<reference key="4">
    <citation type="journal article" date="2018" name="EMBO J.">
        <title>Sde2 is an intron-specific pre-mRNA splicing regulator activated by ubiquitin-like processing.</title>
        <authorList>
            <person name="Thakran P."/>
            <person name="Pandit P.A."/>
            <person name="Datta S."/>
            <person name="Kolathur K.K."/>
            <person name="Pleiss J.A."/>
            <person name="Mishra S.K."/>
        </authorList>
    </citation>
    <scope>FUNCTION</scope>
    <scope>INTERACTION WITH CAY1; PRP19; CWF12 AND CDC5</scope>
    <scope>SUBCELLULAR LOCATION</scope>
    <scope>UBIQUITINATION</scope>
    <scope>DISRUPTION PHENOTYPE</scope>
    <scope>PROTEOLYTIC CLEAVAGE AT GLY-84</scope>
    <scope>MUTAGENESIS OF 83-GLY-GLY-84; LYS-85 AND 86-GLY-GLY-87</scope>
</reference>
<reference key="5">
    <citation type="journal article" date="2022" name="Nucleic Acids Res.">
        <title>Splicing of branchpoint-distant exons is promoted by Cactin, Tls1 and the ubiquitin-fold-activated Sde2.</title>
        <authorList>
            <person name="Anil A.T."/>
            <person name="Choudhary K."/>
            <person name="Pandian R."/>
            <person name="Gupta P."/>
            <person name="Thakran P."/>
            <person name="Singh A."/>
            <person name="Sharma M."/>
            <person name="Mishra S.K."/>
        </authorList>
    </citation>
    <scope>FUNCTION</scope>
    <scope>DISRUPTION PHENOTYPE</scope>
    <scope>PROTEOLYTIC CLEAVAGE AT GLY-84</scope>
    <scope>MUTAGENESIS OF 83-GLY-GLY-84 AND LYS-85</scope>
</reference>
<name>SDE2_SCHPO</name>
<dbReference type="EMBL" id="CU329670">
    <property type="protein sequence ID" value="CAB11702.1"/>
    <property type="molecule type" value="Genomic_DNA"/>
</dbReference>
<dbReference type="PIR" id="T38635">
    <property type="entry name" value="T38635"/>
</dbReference>
<dbReference type="RefSeq" id="NP_594019.1">
    <property type="nucleotide sequence ID" value="NM_001019445.2"/>
</dbReference>
<dbReference type="SMR" id="O14113"/>
<dbReference type="BioGRID" id="278695">
    <property type="interactions" value="136"/>
</dbReference>
<dbReference type="FunCoup" id="O14113">
    <property type="interactions" value="278"/>
</dbReference>
<dbReference type="STRING" id="284812.O14113"/>
<dbReference type="iPTMnet" id="O14113"/>
<dbReference type="PaxDb" id="4896-SPAC31G5.18c.1"/>
<dbReference type="EnsemblFungi" id="SPAC31G5.18c.1">
    <property type="protein sequence ID" value="SPAC31G5.18c.1:pep"/>
    <property type="gene ID" value="SPAC31G5.18c"/>
</dbReference>
<dbReference type="GeneID" id="2542222"/>
<dbReference type="KEGG" id="spo:2542222"/>
<dbReference type="PomBase" id="SPAC31G5.18c">
    <property type="gene designation" value="sde2"/>
</dbReference>
<dbReference type="VEuPathDB" id="FungiDB:SPAC31G5.18c"/>
<dbReference type="eggNOG" id="KOG2827">
    <property type="taxonomic scope" value="Eukaryota"/>
</dbReference>
<dbReference type="HOGENOM" id="CLU_1058291_0_0_1"/>
<dbReference type="InParanoid" id="O14113"/>
<dbReference type="OMA" id="ENQDSCR"/>
<dbReference type="PhylomeDB" id="O14113"/>
<dbReference type="PRO" id="PR:O14113"/>
<dbReference type="Proteomes" id="UP000002485">
    <property type="component" value="Chromosome I"/>
</dbReference>
<dbReference type="GO" id="GO:0005829">
    <property type="term" value="C:cytosol"/>
    <property type="evidence" value="ECO:0007005"/>
    <property type="project" value="PomBase"/>
</dbReference>
<dbReference type="GO" id="GO:0005634">
    <property type="term" value="C:nucleus"/>
    <property type="evidence" value="ECO:0000314"/>
    <property type="project" value="UniProtKB"/>
</dbReference>
<dbReference type="GO" id="GO:0071014">
    <property type="term" value="C:post-mRNA release spliceosomal complex"/>
    <property type="evidence" value="ECO:0000314"/>
    <property type="project" value="PomBase"/>
</dbReference>
<dbReference type="GO" id="GO:0005681">
    <property type="term" value="C:spliceosomal complex"/>
    <property type="evidence" value="ECO:0000314"/>
    <property type="project" value="PomBase"/>
</dbReference>
<dbReference type="GO" id="GO:0000380">
    <property type="term" value="P:alternative mRNA splicing, via spliceosome"/>
    <property type="evidence" value="ECO:0000315"/>
    <property type="project" value="PomBase"/>
</dbReference>
<dbReference type="GO" id="GO:0045292">
    <property type="term" value="P:mRNA cis splicing, via spliceosome"/>
    <property type="evidence" value="ECO:0000314"/>
    <property type="project" value="PomBase"/>
</dbReference>
<dbReference type="InterPro" id="IPR051421">
    <property type="entry name" value="RNA_Proc_DNA_Dmg_Regulator"/>
</dbReference>
<dbReference type="InterPro" id="IPR053822">
    <property type="entry name" value="SDE2-like_dom"/>
</dbReference>
<dbReference type="InterPro" id="IPR024974">
    <property type="entry name" value="Sde2_N"/>
</dbReference>
<dbReference type="PANTHER" id="PTHR12786">
    <property type="entry name" value="SPLICING FACTOR SF3A-RELATED"/>
    <property type="match status" value="1"/>
</dbReference>
<dbReference type="PANTHER" id="PTHR12786:SF1">
    <property type="entry name" value="SPLICING REGULATOR SDE2"/>
    <property type="match status" value="1"/>
</dbReference>
<dbReference type="Pfam" id="PF22782">
    <property type="entry name" value="SDE2"/>
    <property type="match status" value="1"/>
</dbReference>
<dbReference type="Pfam" id="PF13019">
    <property type="entry name" value="Sde2_N_Ubi_yeast"/>
    <property type="match status" value="1"/>
</dbReference>
<proteinExistence type="evidence at protein level"/>
<protein>
    <recommendedName>
        <fullName evidence="5">Splicing regulator sde2</fullName>
    </recommendedName>
    <alternativeName>
        <fullName>Silencing defective protein 2</fullName>
    </alternativeName>
    <alternativeName>
        <fullName>Telomere maintenance protein SDE2</fullName>
    </alternativeName>
</protein>
<keyword id="KW-0131">Cell cycle</keyword>
<keyword id="KW-0963">Cytoplasm</keyword>
<keyword id="KW-0507">mRNA processing</keyword>
<keyword id="KW-0508">mRNA splicing</keyword>
<keyword id="KW-0539">Nucleus</keyword>
<keyword id="KW-1185">Reference proteome</keyword>
<keyword id="KW-0832">Ubl conjugation</keyword>
<organism>
    <name type="scientific">Schizosaccharomyces pombe (strain 972 / ATCC 24843)</name>
    <name type="common">Fission yeast</name>
    <dbReference type="NCBI Taxonomy" id="284812"/>
    <lineage>
        <taxon>Eukaryota</taxon>
        <taxon>Fungi</taxon>
        <taxon>Dikarya</taxon>
        <taxon>Ascomycota</taxon>
        <taxon>Taphrinomycotina</taxon>
        <taxon>Schizosaccharomycetes</taxon>
        <taxon>Schizosaccharomycetales</taxon>
        <taxon>Schizosaccharomycetaceae</taxon>
        <taxon>Schizosaccharomyces</taxon>
    </lineage>
</organism>
<comment type="function">
    <text evidence="2 3 4">Plays a role in pre-mRNA splicing by facilitating excision of introns featuring relatively long (&gt;21 nucleotides) spacing between the branchpoint and 3'-splice site (ss) (PubMed:36095128). Recruits cactin to the spliceosome which may enable folding of RNA between the branchpoint and 3'-ss, to guide the splice site towards the spliceosome's catalytic center (PubMed:36095128). Required for proper chromatin organization by assisting splicing of components involved in genomic stability and telomere organization (PubMed:21333630, PubMed:28947618, PubMed:36095128).</text>
</comment>
<comment type="subunit">
    <text evidence="3">Interacts with cay1/cactin (PubMed:28947618). Interacts with prp19 (PubMed:28947618). Interacts with cwf12 (PubMed:28947618). Interacts with cdc5 (PubMed:28947618).</text>
</comment>
<comment type="subcellular location">
    <subcellularLocation>
        <location evidence="3">Cytoplasm</location>
    </subcellularLocation>
    <subcellularLocation>
        <location evidence="3">Nucleus</location>
    </subcellularLocation>
    <text evidence="3">The unprocessed form localizes to the nucleus. Following cleavage in the nucleus, the C-terminal sde2 remains nuclear, whereas the N-terminal UBL appears to disperse throghout the cell.</text>
</comment>
<comment type="PTM">
    <text evidence="3 4">The N-terminal UBL (ubiquitin-like) propeptide is cleaved at Gly-84 by the deubiquitinating enzymes ubp5 and ubp15; the resulting mature sde2 associates with spliceosomes.</text>
</comment>
<comment type="PTM">
    <text evidence="3">Polyubiquitinated; ubiquitination is partially dependent on ubr11.</text>
</comment>
<comment type="disruption phenotype">
    <text evidence="3 4">Leads to abnormal splicing of introns featuring long spacing between the branchpoint and 3'-splice site (PubMed:36095128). Disrupts association of cay1/cactin with spliceosomes (PubMed:28947618). Sensitive to genotoxic stress by hydroxyurea, valproic acid, sodium butyrate, and cadmium (PubMed:28947618). Sensitive to cold and thermal stress; simultaneous knockout of tls1 exacerbates the growth defect (PubMed:28947618, PubMed:36095128).</text>
</comment>
<comment type="similarity">
    <text evidence="5">Belongs to the SDE2 family.</text>
</comment>
<accession>O14113</accession>
<feature type="propeptide" id="PRO_0000457161" description="UBL" evidence="6 7">
    <location>
        <begin position="1"/>
        <end position="84"/>
    </location>
</feature>
<feature type="chain" id="PRO_0000352831" description="Splicing regulator sde2">
    <location>
        <begin position="85"/>
        <end position="263"/>
    </location>
</feature>
<feature type="region of interest" description="Disordered" evidence="1">
    <location>
        <begin position="95"/>
        <end position="118"/>
    </location>
</feature>
<feature type="region of interest" description="Disordered" evidence="1">
    <location>
        <begin position="137"/>
        <end position="158"/>
    </location>
</feature>
<feature type="region of interest" description="Disordered" evidence="1">
    <location>
        <begin position="194"/>
        <end position="263"/>
    </location>
</feature>
<feature type="compositionally biased region" description="Basic and acidic residues" evidence="1">
    <location>
        <begin position="102"/>
        <end position="117"/>
    </location>
</feature>
<feature type="compositionally biased region" description="Low complexity" evidence="1">
    <location>
        <begin position="194"/>
        <end position="209"/>
    </location>
</feature>
<feature type="compositionally biased region" description="Low complexity" evidence="1">
    <location>
        <begin position="219"/>
        <end position="230"/>
    </location>
</feature>
<feature type="mutagenesis site" description="Abolishes cleavage at Gly-84 and interaction with the spliceosomal subunits cdc5 and cwf21. Leads to abnormal splicing of pre-mRNA with introns featuring long spacing between the branchpoint and 3'-splice site. Sensitive to cold and thermal stress." evidence="3 4">
    <original>GG</original>
    <variation>AA</variation>
    <location>
        <begin position="83"/>
        <end position="84"/>
    </location>
</feature>
<feature type="mutagenesis site" description="Decreases cleavage at Gly-84." evidence="3">
    <original>K</original>
    <variation>A</variation>
    <location>
        <position position="85"/>
    </location>
</feature>
<feature type="mutagenesis site" description="Leads to abnormal splicing of pre-mRNA with introns featuring long spacing between the branchpoint and 3'-splice site. Decreases rate of degradation of sde2 (via the N-end rule pathway). Decreases interaction with cay1/cactin. Sensitive to cold and thermal stress." evidence="3 4">
    <original>K</original>
    <variation>M</variation>
    <location>
        <position position="85"/>
    </location>
</feature>
<feature type="mutagenesis site" description="Abolishes cleavage at Gly-84. Growth defect." evidence="3">
    <original>K</original>
    <variation>P</variation>
    <location>
        <position position="85"/>
    </location>
</feature>
<feature type="mutagenesis site" description="No effect on cleavage at Gly-84." evidence="3">
    <original>GG</original>
    <variation>AA</variation>
    <location>
        <begin position="86"/>
        <end position="87"/>
    </location>
</feature>
<gene>
    <name evidence="8" type="primary">sde2</name>
    <name evidence="8" type="ORF">SPAC31G5.18c</name>
</gene>